<reference key="1">
    <citation type="submission" date="2006-08" db="EMBL/GenBank/DDBJ databases">
        <title>Complete sequence of Maricaulis maris MCS10.</title>
        <authorList>
            <consortium name="US DOE Joint Genome Institute"/>
            <person name="Copeland A."/>
            <person name="Lucas S."/>
            <person name="Lapidus A."/>
            <person name="Barry K."/>
            <person name="Detter J.C."/>
            <person name="Glavina del Rio T."/>
            <person name="Hammon N."/>
            <person name="Israni S."/>
            <person name="Dalin E."/>
            <person name="Tice H."/>
            <person name="Pitluck S."/>
            <person name="Saunders E."/>
            <person name="Brettin T."/>
            <person name="Bruce D."/>
            <person name="Han C."/>
            <person name="Tapia R."/>
            <person name="Gilna P."/>
            <person name="Schmutz J."/>
            <person name="Larimer F."/>
            <person name="Land M."/>
            <person name="Hauser L."/>
            <person name="Kyrpides N."/>
            <person name="Mikhailova N."/>
            <person name="Viollier P."/>
            <person name="Stephens C."/>
            <person name="Richardson P."/>
        </authorList>
    </citation>
    <scope>NUCLEOTIDE SEQUENCE [LARGE SCALE GENOMIC DNA]</scope>
    <source>
        <strain>MCS10</strain>
    </source>
</reference>
<comment type="function">
    <text evidence="1">NDH-1 shuttles electrons from NADH, via FMN and iron-sulfur (Fe-S) centers, to quinones in the respiratory chain. Couples the redox reaction to proton translocation (for every two electrons transferred, four hydrogen ions are translocated across the cytoplasmic membrane), and thus conserves the redox energy in a proton gradient (By similarity).</text>
</comment>
<comment type="catalytic activity">
    <reaction evidence="2">
        <text>a quinone + NADH + 5 H(+)(in) = a quinol + NAD(+) + 4 H(+)(out)</text>
        <dbReference type="Rhea" id="RHEA:57888"/>
        <dbReference type="ChEBI" id="CHEBI:15378"/>
        <dbReference type="ChEBI" id="CHEBI:24646"/>
        <dbReference type="ChEBI" id="CHEBI:57540"/>
        <dbReference type="ChEBI" id="CHEBI:57945"/>
        <dbReference type="ChEBI" id="CHEBI:132124"/>
    </reaction>
</comment>
<comment type="cofactor">
    <cofactor evidence="2">
        <name>[4Fe-4S] cluster</name>
        <dbReference type="ChEBI" id="CHEBI:49883"/>
    </cofactor>
    <text evidence="2">Binds 1 [4Fe-4S] cluster.</text>
</comment>
<comment type="subunit">
    <text evidence="2">NDH-1 is composed of 14 different subunits. Subunits NuoB, C, D, E, F, and G constitute the peripheral sector of the complex.</text>
</comment>
<comment type="subcellular location">
    <subcellularLocation>
        <location evidence="2">Cell inner membrane</location>
        <topology evidence="2">Peripheral membrane protein</topology>
        <orientation evidence="2">Cytoplasmic side</orientation>
    </subcellularLocation>
</comment>
<comment type="similarity">
    <text evidence="2">Belongs to the complex I 20 kDa subunit family.</text>
</comment>
<protein>
    <recommendedName>
        <fullName evidence="2">NADH-quinone oxidoreductase subunit B</fullName>
        <ecNumber evidence="2">7.1.1.-</ecNumber>
    </recommendedName>
    <alternativeName>
        <fullName evidence="2">NADH dehydrogenase I subunit B</fullName>
    </alternativeName>
    <alternativeName>
        <fullName evidence="2">NDH-1 subunit B</fullName>
    </alternativeName>
</protein>
<evidence type="ECO:0000250" key="1"/>
<evidence type="ECO:0000255" key="2">
    <source>
        <dbReference type="HAMAP-Rule" id="MF_01356"/>
    </source>
</evidence>
<name>NUOB_MARMM</name>
<accession>Q0APY9</accession>
<feature type="chain" id="PRO_0000358422" description="NADH-quinone oxidoreductase subunit B">
    <location>
        <begin position="1"/>
        <end position="188"/>
    </location>
</feature>
<feature type="binding site" evidence="2">
    <location>
        <position position="67"/>
    </location>
    <ligand>
        <name>[4Fe-4S] cluster</name>
        <dbReference type="ChEBI" id="CHEBI:49883"/>
    </ligand>
</feature>
<feature type="binding site" evidence="2">
    <location>
        <position position="68"/>
    </location>
    <ligand>
        <name>[4Fe-4S] cluster</name>
        <dbReference type="ChEBI" id="CHEBI:49883"/>
    </ligand>
</feature>
<feature type="binding site" evidence="2">
    <location>
        <position position="132"/>
    </location>
    <ligand>
        <name>[4Fe-4S] cluster</name>
        <dbReference type="ChEBI" id="CHEBI:49883"/>
    </ligand>
</feature>
<feature type="binding site" evidence="2">
    <location>
        <position position="162"/>
    </location>
    <ligand>
        <name>[4Fe-4S] cluster</name>
        <dbReference type="ChEBI" id="CHEBI:49883"/>
    </ligand>
</feature>
<sequence length="188" mass="20541">MASDLTPHAGMAGRATVPGYDPKKHDPFFDGVSDALADKGFVVAAADDLVTWARTGSLMWMTFGLACCAVEMMQASMPRYDVERFGFAPRASPRQSDVMIVAGTLTNKMAPALRKVYDQMPEPRYVISMGSCANGGGYYHYSYSVVRGCDRIVPVDIYVPGCPPTAEALVYGILQLQKKIRREGSIER</sequence>
<proteinExistence type="inferred from homology"/>
<gene>
    <name evidence="2" type="primary">nuoB</name>
    <name type="ordered locus">Mmar10_1356</name>
</gene>
<organism>
    <name type="scientific">Maricaulis maris (strain MCS10)</name>
    <name type="common">Caulobacter maris</name>
    <dbReference type="NCBI Taxonomy" id="394221"/>
    <lineage>
        <taxon>Bacteria</taxon>
        <taxon>Pseudomonadati</taxon>
        <taxon>Pseudomonadota</taxon>
        <taxon>Alphaproteobacteria</taxon>
        <taxon>Maricaulales</taxon>
        <taxon>Maricaulaceae</taxon>
        <taxon>Maricaulis</taxon>
    </lineage>
</organism>
<dbReference type="EC" id="7.1.1.-" evidence="2"/>
<dbReference type="EMBL" id="CP000449">
    <property type="protein sequence ID" value="ABI65648.1"/>
    <property type="molecule type" value="Genomic_DNA"/>
</dbReference>
<dbReference type="RefSeq" id="WP_011643295.1">
    <property type="nucleotide sequence ID" value="NC_008347.1"/>
</dbReference>
<dbReference type="SMR" id="Q0APY9"/>
<dbReference type="STRING" id="394221.Mmar10_1356"/>
<dbReference type="KEGG" id="mmr:Mmar10_1356"/>
<dbReference type="eggNOG" id="COG0377">
    <property type="taxonomic scope" value="Bacteria"/>
</dbReference>
<dbReference type="HOGENOM" id="CLU_055737_7_3_5"/>
<dbReference type="OrthoDB" id="9786737at2"/>
<dbReference type="Proteomes" id="UP000001964">
    <property type="component" value="Chromosome"/>
</dbReference>
<dbReference type="GO" id="GO:0005886">
    <property type="term" value="C:plasma membrane"/>
    <property type="evidence" value="ECO:0007669"/>
    <property type="project" value="UniProtKB-SubCell"/>
</dbReference>
<dbReference type="GO" id="GO:0045271">
    <property type="term" value="C:respiratory chain complex I"/>
    <property type="evidence" value="ECO:0007669"/>
    <property type="project" value="TreeGrafter"/>
</dbReference>
<dbReference type="GO" id="GO:0051539">
    <property type="term" value="F:4 iron, 4 sulfur cluster binding"/>
    <property type="evidence" value="ECO:0007669"/>
    <property type="project" value="UniProtKB-KW"/>
</dbReference>
<dbReference type="GO" id="GO:0005506">
    <property type="term" value="F:iron ion binding"/>
    <property type="evidence" value="ECO:0007669"/>
    <property type="project" value="UniProtKB-UniRule"/>
</dbReference>
<dbReference type="GO" id="GO:0008137">
    <property type="term" value="F:NADH dehydrogenase (ubiquinone) activity"/>
    <property type="evidence" value="ECO:0007669"/>
    <property type="project" value="InterPro"/>
</dbReference>
<dbReference type="GO" id="GO:0050136">
    <property type="term" value="F:NADH:ubiquinone reductase (non-electrogenic) activity"/>
    <property type="evidence" value="ECO:0007669"/>
    <property type="project" value="UniProtKB-UniRule"/>
</dbReference>
<dbReference type="GO" id="GO:0048038">
    <property type="term" value="F:quinone binding"/>
    <property type="evidence" value="ECO:0007669"/>
    <property type="project" value="UniProtKB-KW"/>
</dbReference>
<dbReference type="GO" id="GO:0009060">
    <property type="term" value="P:aerobic respiration"/>
    <property type="evidence" value="ECO:0007669"/>
    <property type="project" value="TreeGrafter"/>
</dbReference>
<dbReference type="GO" id="GO:0015990">
    <property type="term" value="P:electron transport coupled proton transport"/>
    <property type="evidence" value="ECO:0007669"/>
    <property type="project" value="TreeGrafter"/>
</dbReference>
<dbReference type="FunFam" id="3.40.50.12280:FF:000001">
    <property type="entry name" value="NADH-quinone oxidoreductase subunit B 2"/>
    <property type="match status" value="1"/>
</dbReference>
<dbReference type="Gene3D" id="3.40.50.12280">
    <property type="match status" value="1"/>
</dbReference>
<dbReference type="HAMAP" id="MF_01356">
    <property type="entry name" value="NDH1_NuoB"/>
    <property type="match status" value="1"/>
</dbReference>
<dbReference type="InterPro" id="IPR006137">
    <property type="entry name" value="NADH_UbQ_OxRdtase-like_20kDa"/>
</dbReference>
<dbReference type="InterPro" id="IPR006138">
    <property type="entry name" value="NADH_UQ_OxRdtase_20Kd_su"/>
</dbReference>
<dbReference type="NCBIfam" id="TIGR01957">
    <property type="entry name" value="nuoB_fam"/>
    <property type="match status" value="1"/>
</dbReference>
<dbReference type="NCBIfam" id="NF005012">
    <property type="entry name" value="PRK06411.1"/>
    <property type="match status" value="1"/>
</dbReference>
<dbReference type="PANTHER" id="PTHR11995">
    <property type="entry name" value="NADH DEHYDROGENASE"/>
    <property type="match status" value="1"/>
</dbReference>
<dbReference type="PANTHER" id="PTHR11995:SF14">
    <property type="entry name" value="NADH DEHYDROGENASE [UBIQUINONE] IRON-SULFUR PROTEIN 7, MITOCHONDRIAL"/>
    <property type="match status" value="1"/>
</dbReference>
<dbReference type="Pfam" id="PF01058">
    <property type="entry name" value="Oxidored_q6"/>
    <property type="match status" value="1"/>
</dbReference>
<dbReference type="SUPFAM" id="SSF56770">
    <property type="entry name" value="HydA/Nqo6-like"/>
    <property type="match status" value="1"/>
</dbReference>
<dbReference type="PROSITE" id="PS01150">
    <property type="entry name" value="COMPLEX1_20K"/>
    <property type="match status" value="1"/>
</dbReference>
<keyword id="KW-0004">4Fe-4S</keyword>
<keyword id="KW-0997">Cell inner membrane</keyword>
<keyword id="KW-1003">Cell membrane</keyword>
<keyword id="KW-0408">Iron</keyword>
<keyword id="KW-0411">Iron-sulfur</keyword>
<keyword id="KW-0472">Membrane</keyword>
<keyword id="KW-0479">Metal-binding</keyword>
<keyword id="KW-0520">NAD</keyword>
<keyword id="KW-0874">Quinone</keyword>
<keyword id="KW-1185">Reference proteome</keyword>
<keyword id="KW-1278">Translocase</keyword>
<keyword id="KW-0813">Transport</keyword>
<keyword id="KW-0830">Ubiquinone</keyword>